<dbReference type="GO" id="GO:0005576">
    <property type="term" value="C:extracellular region"/>
    <property type="evidence" value="ECO:0007669"/>
    <property type="project" value="UniProtKB-SubCell"/>
</dbReference>
<dbReference type="GO" id="GO:0090729">
    <property type="term" value="F:toxin activity"/>
    <property type="evidence" value="ECO:0007669"/>
    <property type="project" value="UniProtKB-KW"/>
</dbReference>
<evidence type="ECO:0000250" key="1"/>
<evidence type="ECO:0000269" key="2">
    <source>
    </source>
</evidence>
<evidence type="ECO:0000305" key="3"/>
<evidence type="ECO:0000305" key="4">
    <source>
    </source>
</evidence>
<name>VSPH_CROAT</name>
<feature type="chain" id="PRO_0000407589" description="Snake venom serine protease homolog">
    <location>
        <begin position="1" status="less than"/>
        <end position="9" status="greater than"/>
    </location>
</feature>
<feature type="non-terminal residue" evidence="3">
    <location>
        <position position="1"/>
    </location>
</feature>
<feature type="non-terminal residue" evidence="3">
    <location>
        <position position="9"/>
    </location>
</feature>
<proteinExistence type="evidence at protein level"/>
<sequence>FLVALYTFR</sequence>
<protein>
    <recommendedName>
        <fullName>Snake venom serine protease homolog</fullName>
    </recommendedName>
    <alternativeName>
        <fullName>Serine proteinase-like protein</fullName>
    </alternativeName>
</protein>
<reference key="1">
    <citation type="journal article" date="2009" name="J. Proteome Res.">
        <title>Exploring the venom proteome of the western diamondback rattlesnake, Crotalus atrox, via snake venomics and combinatorial peptide ligand library approaches.</title>
        <authorList>
            <person name="Calvete J.J."/>
            <person name="Fasoli E."/>
            <person name="Sanz L."/>
            <person name="Boschetti E."/>
            <person name="Righetti P.G."/>
        </authorList>
    </citation>
    <scope>PROTEIN SEQUENCE</scope>
    <scope>IDENTIFICATION BY MASS SPECTROMETRY</scope>
    <scope>SUBCELLULAR LOCATION</scope>
    <source>
        <tissue>Venom</tissue>
    </source>
</reference>
<keyword id="KW-0903">Direct protein sequencing</keyword>
<keyword id="KW-1015">Disulfide bond</keyword>
<keyword id="KW-1199">Hemostasis impairing toxin</keyword>
<keyword id="KW-0964">Secreted</keyword>
<keyword id="KW-0721">Serine protease homolog</keyword>
<keyword id="KW-0800">Toxin</keyword>
<accession>P0CV90</accession>
<comment type="function">
    <text evidence="3">Snake venom serine protease homolog that may act in the hemostasis system of the prey.</text>
</comment>
<comment type="subcellular location">
    <subcellularLocation>
        <location evidence="2">Secreted</location>
    </subcellularLocation>
</comment>
<comment type="tissue specificity">
    <text evidence="4">Expressed by the venom gland.</text>
</comment>
<comment type="PTM">
    <text evidence="1">Contains 6 disulfide bonds.</text>
</comment>
<comment type="similarity">
    <text evidence="3">Belongs to the peptidase S1 family. Snake venom subfamily.</text>
</comment>
<organism>
    <name type="scientific">Crotalus atrox</name>
    <name type="common">Western diamondback rattlesnake</name>
    <dbReference type="NCBI Taxonomy" id="8730"/>
    <lineage>
        <taxon>Eukaryota</taxon>
        <taxon>Metazoa</taxon>
        <taxon>Chordata</taxon>
        <taxon>Craniata</taxon>
        <taxon>Vertebrata</taxon>
        <taxon>Euteleostomi</taxon>
        <taxon>Lepidosauria</taxon>
        <taxon>Squamata</taxon>
        <taxon>Bifurcata</taxon>
        <taxon>Unidentata</taxon>
        <taxon>Episquamata</taxon>
        <taxon>Toxicofera</taxon>
        <taxon>Serpentes</taxon>
        <taxon>Colubroidea</taxon>
        <taxon>Viperidae</taxon>
        <taxon>Crotalinae</taxon>
        <taxon>Crotalus</taxon>
    </lineage>
</organism>